<name>DGTL1_BRADU</name>
<organism>
    <name type="scientific">Bradyrhizobium diazoefficiens (strain JCM 10833 / BCRC 13528 / IAM 13628 / NBRC 14792 / USDA 110)</name>
    <dbReference type="NCBI Taxonomy" id="224911"/>
    <lineage>
        <taxon>Bacteria</taxon>
        <taxon>Pseudomonadati</taxon>
        <taxon>Pseudomonadota</taxon>
        <taxon>Alphaproteobacteria</taxon>
        <taxon>Hyphomicrobiales</taxon>
        <taxon>Nitrobacteraceae</taxon>
        <taxon>Bradyrhizobium</taxon>
    </lineage>
</organism>
<proteinExistence type="inferred from homology"/>
<feature type="chain" id="PRO_0000205295" description="Deoxyguanosinetriphosphate triphosphohydrolase-like protein">
    <location>
        <begin position="1"/>
        <end position="402"/>
    </location>
</feature>
<feature type="domain" description="HD" evidence="2">
    <location>
        <begin position="69"/>
        <end position="217"/>
    </location>
</feature>
<keyword id="KW-0378">Hydrolase</keyword>
<keyword id="KW-1185">Reference proteome</keyword>
<reference key="1">
    <citation type="journal article" date="2002" name="DNA Res.">
        <title>Complete genomic sequence of nitrogen-fixing symbiotic bacterium Bradyrhizobium japonicum USDA110.</title>
        <authorList>
            <person name="Kaneko T."/>
            <person name="Nakamura Y."/>
            <person name="Sato S."/>
            <person name="Minamisawa K."/>
            <person name="Uchiumi T."/>
            <person name="Sasamoto S."/>
            <person name="Watanabe A."/>
            <person name="Idesawa K."/>
            <person name="Iriguchi M."/>
            <person name="Kawashima K."/>
            <person name="Kohara M."/>
            <person name="Matsumoto M."/>
            <person name="Shimpo S."/>
            <person name="Tsuruoka H."/>
            <person name="Wada T."/>
            <person name="Yamada M."/>
            <person name="Tabata S."/>
        </authorList>
    </citation>
    <scope>NUCLEOTIDE SEQUENCE [LARGE SCALE GENOMIC DNA]</scope>
    <source>
        <strain>JCM 10833 / BCRC 13528 / IAM 13628 / NBRC 14792 / USDA 110</strain>
    </source>
</reference>
<evidence type="ECO:0000255" key="1">
    <source>
        <dbReference type="HAMAP-Rule" id="MF_01212"/>
    </source>
</evidence>
<evidence type="ECO:0000255" key="2">
    <source>
        <dbReference type="PROSITE-ProRule" id="PRU01175"/>
    </source>
</evidence>
<dbReference type="EMBL" id="BA000040">
    <property type="protein sequence ID" value="BAC50023.1"/>
    <property type="molecule type" value="Genomic_DNA"/>
</dbReference>
<dbReference type="RefSeq" id="NP_771398.1">
    <property type="nucleotide sequence ID" value="NC_004463.1"/>
</dbReference>
<dbReference type="RefSeq" id="WP_011087526.1">
    <property type="nucleotide sequence ID" value="NC_004463.1"/>
</dbReference>
<dbReference type="SMR" id="Q89KZ0"/>
<dbReference type="FunCoup" id="Q89KZ0">
    <property type="interactions" value="195"/>
</dbReference>
<dbReference type="STRING" id="224911.AAV28_21075"/>
<dbReference type="EnsemblBacteria" id="BAC50023">
    <property type="protein sequence ID" value="BAC50023"/>
    <property type="gene ID" value="BAC50023"/>
</dbReference>
<dbReference type="GeneID" id="46491764"/>
<dbReference type="KEGG" id="bja:bll4758"/>
<dbReference type="PATRIC" id="fig|224911.5.peg.4831"/>
<dbReference type="eggNOG" id="COG0232">
    <property type="taxonomic scope" value="Bacteria"/>
</dbReference>
<dbReference type="HOGENOM" id="CLU_028163_1_0_5"/>
<dbReference type="InParanoid" id="Q89KZ0"/>
<dbReference type="OrthoDB" id="9803619at2"/>
<dbReference type="PhylomeDB" id="Q89KZ0"/>
<dbReference type="Proteomes" id="UP000002526">
    <property type="component" value="Chromosome"/>
</dbReference>
<dbReference type="GO" id="GO:0008832">
    <property type="term" value="F:dGTPase activity"/>
    <property type="evidence" value="ECO:0000318"/>
    <property type="project" value="GO_Central"/>
</dbReference>
<dbReference type="GO" id="GO:0006203">
    <property type="term" value="P:dGTP catabolic process"/>
    <property type="evidence" value="ECO:0000318"/>
    <property type="project" value="GO_Central"/>
</dbReference>
<dbReference type="CDD" id="cd00077">
    <property type="entry name" value="HDc"/>
    <property type="match status" value="1"/>
</dbReference>
<dbReference type="FunFam" id="1.10.3210.10:FF:000094">
    <property type="entry name" value="Deoxyguanosinetriphosphate triphosphohydrolase-like protein"/>
    <property type="match status" value="1"/>
</dbReference>
<dbReference type="Gene3D" id="1.10.3210.10">
    <property type="entry name" value="Hypothetical protein af1432"/>
    <property type="match status" value="1"/>
</dbReference>
<dbReference type="HAMAP" id="MF_01212">
    <property type="entry name" value="dGTPase_type2"/>
    <property type="match status" value="1"/>
</dbReference>
<dbReference type="InterPro" id="IPR006261">
    <property type="entry name" value="dGTPase"/>
</dbReference>
<dbReference type="InterPro" id="IPR050135">
    <property type="entry name" value="dGTPase-like"/>
</dbReference>
<dbReference type="InterPro" id="IPR023023">
    <property type="entry name" value="dNTPase_2"/>
</dbReference>
<dbReference type="InterPro" id="IPR003607">
    <property type="entry name" value="HD/PDEase_dom"/>
</dbReference>
<dbReference type="InterPro" id="IPR006674">
    <property type="entry name" value="HD_domain"/>
</dbReference>
<dbReference type="InterPro" id="IPR026875">
    <property type="entry name" value="PHydrolase_assoc_dom"/>
</dbReference>
<dbReference type="NCBIfam" id="TIGR01353">
    <property type="entry name" value="dGTP_triPase"/>
    <property type="match status" value="1"/>
</dbReference>
<dbReference type="NCBIfam" id="NF002326">
    <property type="entry name" value="PRK01286.1-1"/>
    <property type="match status" value="1"/>
</dbReference>
<dbReference type="NCBIfam" id="NF002328">
    <property type="entry name" value="PRK01286.1-3"/>
    <property type="match status" value="1"/>
</dbReference>
<dbReference type="PANTHER" id="PTHR11373:SF43">
    <property type="entry name" value="DEOXYGUANOSINETRIPHOSPHATE TRIPHOSPHOHYDROLASE-LIKE PROTEIN"/>
    <property type="match status" value="1"/>
</dbReference>
<dbReference type="PANTHER" id="PTHR11373">
    <property type="entry name" value="DEOXYNUCLEOSIDE TRIPHOSPHATE TRIPHOSPHOHYDROLASE"/>
    <property type="match status" value="1"/>
</dbReference>
<dbReference type="Pfam" id="PF01966">
    <property type="entry name" value="HD"/>
    <property type="match status" value="1"/>
</dbReference>
<dbReference type="Pfam" id="PF13286">
    <property type="entry name" value="HD_assoc"/>
    <property type="match status" value="1"/>
</dbReference>
<dbReference type="SMART" id="SM00471">
    <property type="entry name" value="HDc"/>
    <property type="match status" value="1"/>
</dbReference>
<dbReference type="SUPFAM" id="SSF109604">
    <property type="entry name" value="HD-domain/PDEase-like"/>
    <property type="match status" value="1"/>
</dbReference>
<dbReference type="PROSITE" id="PS51831">
    <property type="entry name" value="HD"/>
    <property type="match status" value="1"/>
</dbReference>
<accession>Q89KZ0</accession>
<comment type="similarity">
    <text evidence="1">Belongs to the dGTPase family. Type 2 subfamily.</text>
</comment>
<sequence>MSVGMAAPHAPYACDPDRSRGRLVAEPPSRTRSPFRRDCDRVIHSTAFRRLKYKTQVFVFHEGDHYRTRLTHSLEVAQIARALARQLGLDEDLTETLALAHDLGHPPFGHAGERALDACLKEFGGFDHNAQALRVVAALEHRYPEFDGLNLTWESLEGIVKHNGPLTDRSGAPVGHYREHGIPVGIADYIKVYDLELWSFASLEAQVAAIADDIAYDAHDIDDGLRAGLFDLDDLKAMPLTAAIIAETSAHYPDLEDVRRGAELVRELISHLIGAVFAEAQKNLAATKPQSAQDVRQQSRALIAFPADVAEEEAAIKRFLYQHMYRHKRVMRVMGEAKQILFDLFAKYLKSPAELPPEWLTGAEADNEGDRARRIGNFIAGMTDRFALTEHQRLFDSTPDLR</sequence>
<protein>
    <recommendedName>
        <fullName evidence="1">Deoxyguanosinetriphosphate triphosphohydrolase-like protein</fullName>
    </recommendedName>
</protein>
<gene>
    <name type="ordered locus">bll4758</name>
</gene>